<proteinExistence type="inferred from homology"/>
<keyword id="KW-0963">Cytoplasm</keyword>
<keyword id="KW-0217">Developmental protein</keyword>
<keyword id="KW-0539">Nucleus</keyword>
<keyword id="KW-1185">Reference proteome</keyword>
<keyword id="KW-0687">Ribonucleoprotein</keyword>
<keyword id="KW-0689">Ribosomal protein</keyword>
<protein>
    <recommendedName>
        <fullName evidence="1">Small ribosomal subunit protein uS2</fullName>
    </recommendedName>
    <alternativeName>
        <fullName evidence="3">40S ribosomal protein SA</fullName>
    </alternativeName>
    <alternativeName>
        <fullName evidence="1">Protein stubarista</fullName>
    </alternativeName>
</protein>
<evidence type="ECO:0000255" key="1">
    <source>
        <dbReference type="HAMAP-Rule" id="MF_03015"/>
    </source>
</evidence>
<evidence type="ECO:0000256" key="2">
    <source>
        <dbReference type="SAM" id="MobiDB-lite"/>
    </source>
</evidence>
<evidence type="ECO:0000305" key="3"/>
<sequence>MSGGLDILSLKEDDITKMLVATTHLGSENVNFQMEQYVYKRRADGVNIINLGKTWEKLQLAARAIVAIDNASDVFVISSRPIGQRAVLKFAKYTDTTPIAGRFTPGAFTNQIQPAFREPRLLVVTDPNTDHQPIMEASYVNIPVIAFTNTDSPLRYIDIAIPCNNKSAHSIGLMWWLLAREVLRLRGTISRSVEWPVVVDLFFYRDPEEAEKEEAAAKELLPPPKIEEAVDHPVEETTNWADEVAAETVGGVEDWNEDTVKTSWGSDGQF</sequence>
<feature type="initiator methionine" description="Removed" evidence="1">
    <location>
        <position position="1"/>
    </location>
</feature>
<feature type="chain" id="PRO_0000371580" description="Small ribosomal subunit protein uS2">
    <location>
        <begin position="2"/>
        <end position="270"/>
    </location>
</feature>
<feature type="region of interest" description="Disordered" evidence="2">
    <location>
        <begin position="251"/>
        <end position="270"/>
    </location>
</feature>
<feature type="compositionally biased region" description="Polar residues" evidence="2">
    <location>
        <begin position="261"/>
        <end position="270"/>
    </location>
</feature>
<comment type="function">
    <text evidence="1">Required for the assembly and/or stability of the 40S ribosomal subunit. Required for the processing of the 20S rRNA-precursor to mature 18S rRNA in a late step of the maturation of 40S ribosomal subunits. Required during oogenesis and imaginal development.</text>
</comment>
<comment type="subunit">
    <text evidence="1">Component of the small ribosomal subunit. Mature ribosomes consist of a small (40S) and a large (60S) subunit. The 40S subunit contains about 33 different proteins and 1 molecule of RNA (18S). The 60S subunit contains about 49 different proteins and 3 molecules of RNA (28S, 5.8S and 5S). Interacts with oho23B/rpS21.</text>
</comment>
<comment type="subcellular location">
    <subcellularLocation>
        <location evidence="1">Cytoplasm</location>
    </subcellularLocation>
    <subcellularLocation>
        <location evidence="1">Nucleus</location>
    </subcellularLocation>
    <text evidence="1">May associate with nascent RNP complexes within the nucleus.</text>
</comment>
<comment type="similarity">
    <text evidence="1">Belongs to the universal ribosomal protein uS2 family.</text>
</comment>
<name>RSSA_DROAN</name>
<reference key="1">
    <citation type="journal article" date="2007" name="Nature">
        <title>Evolution of genes and genomes on the Drosophila phylogeny.</title>
        <authorList>
            <consortium name="Drosophila 12 genomes consortium"/>
        </authorList>
    </citation>
    <scope>NUCLEOTIDE SEQUENCE [LARGE SCALE GENOMIC DNA]</scope>
    <source>
        <strain>Tucson 14024-0371.13</strain>
    </source>
</reference>
<gene>
    <name evidence="1" type="primary">sta</name>
    <name type="ORF">GF21363</name>
</gene>
<organism>
    <name type="scientific">Drosophila ananassae</name>
    <name type="common">Fruit fly</name>
    <dbReference type="NCBI Taxonomy" id="7217"/>
    <lineage>
        <taxon>Eukaryota</taxon>
        <taxon>Metazoa</taxon>
        <taxon>Ecdysozoa</taxon>
        <taxon>Arthropoda</taxon>
        <taxon>Hexapoda</taxon>
        <taxon>Insecta</taxon>
        <taxon>Pterygota</taxon>
        <taxon>Neoptera</taxon>
        <taxon>Endopterygota</taxon>
        <taxon>Diptera</taxon>
        <taxon>Brachycera</taxon>
        <taxon>Muscomorpha</taxon>
        <taxon>Ephydroidea</taxon>
        <taxon>Drosophilidae</taxon>
        <taxon>Drosophila</taxon>
        <taxon>Sophophora</taxon>
    </lineage>
</organism>
<dbReference type="EMBL" id="CH902622">
    <property type="protein sequence ID" value="EDV34527.1"/>
    <property type="molecule type" value="Genomic_DNA"/>
</dbReference>
<dbReference type="SMR" id="B3MRX2"/>
<dbReference type="FunCoup" id="B3MRX2">
    <property type="interactions" value="1291"/>
</dbReference>
<dbReference type="STRING" id="7217.B3MRX2"/>
<dbReference type="EnsemblMetazoa" id="FBtr0126063">
    <property type="protein sequence ID" value="FBpp0124555"/>
    <property type="gene ID" value="FBgn0098365"/>
</dbReference>
<dbReference type="EnsemblMetazoa" id="XM_001964042.4">
    <property type="protein sequence ID" value="XP_001964078.1"/>
    <property type="gene ID" value="LOC6504047"/>
</dbReference>
<dbReference type="GeneID" id="6504047"/>
<dbReference type="KEGG" id="dan:6504047"/>
<dbReference type="CTD" id="104044"/>
<dbReference type="eggNOG" id="KOG0830">
    <property type="taxonomic scope" value="Eukaryota"/>
</dbReference>
<dbReference type="HOGENOM" id="CLU_058171_1_0_1"/>
<dbReference type="InParanoid" id="B3MRX2"/>
<dbReference type="OMA" id="VKNFFEP"/>
<dbReference type="OrthoDB" id="414863at2759"/>
<dbReference type="PhylomeDB" id="B3MRX2"/>
<dbReference type="ChiTaRS" id="sta">
    <property type="organism name" value="fly"/>
</dbReference>
<dbReference type="Proteomes" id="UP000007801">
    <property type="component" value="Unassembled WGS sequence"/>
</dbReference>
<dbReference type="GO" id="GO:0022627">
    <property type="term" value="C:cytosolic small ribosomal subunit"/>
    <property type="evidence" value="ECO:0007669"/>
    <property type="project" value="UniProtKB-UniRule"/>
</dbReference>
<dbReference type="GO" id="GO:0005634">
    <property type="term" value="C:nucleus"/>
    <property type="evidence" value="ECO:0007669"/>
    <property type="project" value="UniProtKB-SubCell"/>
</dbReference>
<dbReference type="GO" id="GO:0043022">
    <property type="term" value="F:ribosome binding"/>
    <property type="evidence" value="ECO:0007669"/>
    <property type="project" value="EnsemblMetazoa"/>
</dbReference>
<dbReference type="GO" id="GO:0003735">
    <property type="term" value="F:structural constituent of ribosome"/>
    <property type="evidence" value="ECO:0007669"/>
    <property type="project" value="UniProtKB-UniRule"/>
</dbReference>
<dbReference type="GO" id="GO:0000028">
    <property type="term" value="P:ribosomal small subunit assembly"/>
    <property type="evidence" value="ECO:0007669"/>
    <property type="project" value="UniProtKB-UniRule"/>
</dbReference>
<dbReference type="GO" id="GO:0006412">
    <property type="term" value="P:translation"/>
    <property type="evidence" value="ECO:0007669"/>
    <property type="project" value="UniProtKB-UniRule"/>
</dbReference>
<dbReference type="CDD" id="cd01425">
    <property type="entry name" value="RPS2"/>
    <property type="match status" value="1"/>
</dbReference>
<dbReference type="FunFam" id="3.40.50.10490:FF:000012">
    <property type="entry name" value="40S ribosomal protein SA"/>
    <property type="match status" value="1"/>
</dbReference>
<dbReference type="Gene3D" id="3.40.50.10490">
    <property type="entry name" value="Glucose-6-phosphate isomerase like protein, domain 1"/>
    <property type="match status" value="1"/>
</dbReference>
<dbReference type="HAMAP" id="MF_03015">
    <property type="entry name" value="Ribosomal_S2_euk"/>
    <property type="match status" value="1"/>
</dbReference>
<dbReference type="InterPro" id="IPR001865">
    <property type="entry name" value="Ribosomal_uS2"/>
</dbReference>
<dbReference type="InterPro" id="IPR032281">
    <property type="entry name" value="Ribosomal_uS2_C"/>
</dbReference>
<dbReference type="InterPro" id="IPR018130">
    <property type="entry name" value="Ribosomal_uS2_CS"/>
</dbReference>
<dbReference type="InterPro" id="IPR027498">
    <property type="entry name" value="Ribosomal_uS2_euk"/>
</dbReference>
<dbReference type="InterPro" id="IPR005707">
    <property type="entry name" value="Ribosomal_uS2_euk/arc"/>
</dbReference>
<dbReference type="InterPro" id="IPR023591">
    <property type="entry name" value="Ribosomal_uS2_flav_dom_sf"/>
</dbReference>
<dbReference type="NCBIfam" id="TIGR01012">
    <property type="entry name" value="uS2_euk_arch"/>
    <property type="match status" value="1"/>
</dbReference>
<dbReference type="PANTHER" id="PTHR11489">
    <property type="entry name" value="40S RIBOSOMAL PROTEIN SA"/>
    <property type="match status" value="1"/>
</dbReference>
<dbReference type="Pfam" id="PF16122">
    <property type="entry name" value="40S_SA_C"/>
    <property type="match status" value="1"/>
</dbReference>
<dbReference type="Pfam" id="PF00318">
    <property type="entry name" value="Ribosomal_S2"/>
    <property type="match status" value="2"/>
</dbReference>
<dbReference type="PRINTS" id="PR00395">
    <property type="entry name" value="RIBOSOMALS2"/>
</dbReference>
<dbReference type="SUPFAM" id="SSF52313">
    <property type="entry name" value="Ribosomal protein S2"/>
    <property type="match status" value="1"/>
</dbReference>
<dbReference type="PROSITE" id="PS00962">
    <property type="entry name" value="RIBOSOMAL_S2_1"/>
    <property type="match status" value="1"/>
</dbReference>
<dbReference type="PROSITE" id="PS00963">
    <property type="entry name" value="RIBOSOMAL_S2_2"/>
    <property type="match status" value="1"/>
</dbReference>
<accession>B3MRX2</accession>